<feature type="chain" id="PRO_0000156352" description="Inosine/xanthosine triphosphatase">
    <location>
        <begin position="1"/>
        <end position="182"/>
    </location>
</feature>
<comment type="function">
    <text evidence="1">Phosphatase that hydrolyzes non-canonical purine nucleotides such as XTP and ITP to their respective diphosphate derivatives. Probably excludes non-canonical purines from DNA/RNA precursor pool, thus preventing their incorporation into DNA/RNA and avoiding chromosomal lesions.</text>
</comment>
<comment type="catalytic activity">
    <reaction evidence="1">
        <text>XTP + H2O = XDP + phosphate + H(+)</text>
        <dbReference type="Rhea" id="RHEA:28406"/>
        <dbReference type="ChEBI" id="CHEBI:15377"/>
        <dbReference type="ChEBI" id="CHEBI:15378"/>
        <dbReference type="ChEBI" id="CHEBI:43474"/>
        <dbReference type="ChEBI" id="CHEBI:59884"/>
        <dbReference type="ChEBI" id="CHEBI:61314"/>
        <dbReference type="EC" id="3.6.1.73"/>
    </reaction>
</comment>
<comment type="catalytic activity">
    <reaction evidence="1">
        <text>ITP + H2O = IDP + phosphate + H(+)</text>
        <dbReference type="Rhea" id="RHEA:28330"/>
        <dbReference type="ChEBI" id="CHEBI:15377"/>
        <dbReference type="ChEBI" id="CHEBI:15378"/>
        <dbReference type="ChEBI" id="CHEBI:43474"/>
        <dbReference type="ChEBI" id="CHEBI:58280"/>
        <dbReference type="ChEBI" id="CHEBI:61402"/>
        <dbReference type="EC" id="3.6.1.73"/>
    </reaction>
</comment>
<comment type="cofactor">
    <cofactor evidence="1">
        <name>Mg(2+)</name>
        <dbReference type="ChEBI" id="CHEBI:18420"/>
    </cofactor>
    <cofactor evidence="1">
        <name>Mn(2+)</name>
        <dbReference type="ChEBI" id="CHEBI:29035"/>
    </cofactor>
    <text evidence="1">Binds 1 divalent metal cation per subunit; can use either Mg(2+) or Mn(2+).</text>
</comment>
<comment type="subunit">
    <text evidence="1">Homodimer.</text>
</comment>
<comment type="similarity">
    <text evidence="1">Belongs to the YjjX NTPase family.</text>
</comment>
<sequence length="182" mass="19812">MSKKIMATQKVVIASLNPAKINAVKSAFQSAFPQQVFEFVGISVPSEVADQPMTNEETHRGALNRVKNAKLEMPTADFYVGLEAGIEGNVTFAWMVIESDTHRGESRSASLMLPPEVLAQLADANELGDVMDKVFGTENIKQKGGAISLLTQNQLTRSSVYHQALILALIPFTNPDHFPANL</sequence>
<evidence type="ECO:0000255" key="1">
    <source>
        <dbReference type="HAMAP-Rule" id="MF_00648"/>
    </source>
</evidence>
<proteinExistence type="inferred from homology"/>
<protein>
    <recommendedName>
        <fullName evidence="1">Inosine/xanthosine triphosphatase</fullName>
        <shortName evidence="1">ITPase/XTPase</shortName>
        <ecNumber evidence="1">3.6.1.73</ecNumber>
    </recommendedName>
    <alternativeName>
        <fullName evidence="1">Non-canonical purine NTP phosphatase</fullName>
    </alternativeName>
    <alternativeName>
        <fullName evidence="1">Non-standard purine NTP phosphatase</fullName>
    </alternativeName>
    <alternativeName>
        <fullName evidence="1">Nucleoside-triphosphate phosphatase</fullName>
        <shortName evidence="1">NTPase</shortName>
    </alternativeName>
</protein>
<reference key="1">
    <citation type="journal article" date="2003" name="Lancet">
        <title>Genome sequence of Vibrio parahaemolyticus: a pathogenic mechanism distinct from that of V. cholerae.</title>
        <authorList>
            <person name="Makino K."/>
            <person name="Oshima K."/>
            <person name="Kurokawa K."/>
            <person name="Yokoyama K."/>
            <person name="Uda T."/>
            <person name="Tagomori K."/>
            <person name="Iijima Y."/>
            <person name="Najima M."/>
            <person name="Nakano M."/>
            <person name="Yamashita A."/>
            <person name="Kubota Y."/>
            <person name="Kimura S."/>
            <person name="Yasunaga T."/>
            <person name="Honda T."/>
            <person name="Shinagawa H."/>
            <person name="Hattori M."/>
            <person name="Iida T."/>
        </authorList>
    </citation>
    <scope>NUCLEOTIDE SEQUENCE [LARGE SCALE GENOMIC DNA]</scope>
    <source>
        <strain>RIMD 2210633</strain>
    </source>
</reference>
<name>NCPP_VIBPA</name>
<accession>Q87S70</accession>
<keyword id="KW-0378">Hydrolase</keyword>
<keyword id="KW-0460">Magnesium</keyword>
<keyword id="KW-0464">Manganese</keyword>
<keyword id="KW-0479">Metal-binding</keyword>
<keyword id="KW-0546">Nucleotide metabolism</keyword>
<keyword id="KW-0547">Nucleotide-binding</keyword>
<organism>
    <name type="scientific">Vibrio parahaemolyticus serotype O3:K6 (strain RIMD 2210633)</name>
    <dbReference type="NCBI Taxonomy" id="223926"/>
    <lineage>
        <taxon>Bacteria</taxon>
        <taxon>Pseudomonadati</taxon>
        <taxon>Pseudomonadota</taxon>
        <taxon>Gammaproteobacteria</taxon>
        <taxon>Vibrionales</taxon>
        <taxon>Vibrionaceae</taxon>
        <taxon>Vibrio</taxon>
    </lineage>
</organism>
<gene>
    <name type="ordered locus">VP0554</name>
</gene>
<dbReference type="EC" id="3.6.1.73" evidence="1"/>
<dbReference type="EMBL" id="BA000031">
    <property type="protein sequence ID" value="BAC58817.1"/>
    <property type="molecule type" value="Genomic_DNA"/>
</dbReference>
<dbReference type="RefSeq" id="NP_796933.1">
    <property type="nucleotide sequence ID" value="NC_004603.1"/>
</dbReference>
<dbReference type="SMR" id="Q87S70"/>
<dbReference type="KEGG" id="vpa:VP0554"/>
<dbReference type="PATRIC" id="fig|223926.6.peg.526"/>
<dbReference type="eggNOG" id="COG1986">
    <property type="taxonomic scope" value="Bacteria"/>
</dbReference>
<dbReference type="HOGENOM" id="CLU_087417_1_0_6"/>
<dbReference type="Proteomes" id="UP000002493">
    <property type="component" value="Chromosome 1"/>
</dbReference>
<dbReference type="GO" id="GO:0103023">
    <property type="term" value="F:ITPase activity"/>
    <property type="evidence" value="ECO:0007669"/>
    <property type="project" value="UniProtKB-EC"/>
</dbReference>
<dbReference type="GO" id="GO:0046872">
    <property type="term" value="F:metal ion binding"/>
    <property type="evidence" value="ECO:0007669"/>
    <property type="project" value="UniProtKB-KW"/>
</dbReference>
<dbReference type="GO" id="GO:0000166">
    <property type="term" value="F:nucleotide binding"/>
    <property type="evidence" value="ECO:0007669"/>
    <property type="project" value="UniProtKB-KW"/>
</dbReference>
<dbReference type="GO" id="GO:0017111">
    <property type="term" value="F:ribonucleoside triphosphate phosphatase activity"/>
    <property type="evidence" value="ECO:0000250"/>
    <property type="project" value="UniProtKB"/>
</dbReference>
<dbReference type="GO" id="GO:0009117">
    <property type="term" value="P:nucleotide metabolic process"/>
    <property type="evidence" value="ECO:0007669"/>
    <property type="project" value="UniProtKB-KW"/>
</dbReference>
<dbReference type="GO" id="GO:0006772">
    <property type="term" value="P:thiamine metabolic process"/>
    <property type="evidence" value="ECO:0007669"/>
    <property type="project" value="TreeGrafter"/>
</dbReference>
<dbReference type="FunFam" id="3.90.950.10:FF:000002">
    <property type="entry name" value="Inosine/xanthosine triphosphatase"/>
    <property type="match status" value="1"/>
</dbReference>
<dbReference type="Gene3D" id="3.90.950.10">
    <property type="match status" value="1"/>
</dbReference>
<dbReference type="HAMAP" id="MF_00648">
    <property type="entry name" value="Non_canon_purine_NTPase_YjjX"/>
    <property type="match status" value="1"/>
</dbReference>
<dbReference type="InterPro" id="IPR029001">
    <property type="entry name" value="ITPase-like_fam"/>
</dbReference>
<dbReference type="InterPro" id="IPR002786">
    <property type="entry name" value="Non_canon_purine_NTPase"/>
</dbReference>
<dbReference type="InterPro" id="IPR026533">
    <property type="entry name" value="NTPase/PRRC1"/>
</dbReference>
<dbReference type="InterPro" id="IPR050299">
    <property type="entry name" value="YjjX_NTPase"/>
</dbReference>
<dbReference type="NCBIfam" id="TIGR00258">
    <property type="entry name" value="inosine/xanthosine triphosphatase"/>
    <property type="match status" value="1"/>
</dbReference>
<dbReference type="NCBIfam" id="NF003459">
    <property type="entry name" value="PRK05074.1"/>
    <property type="match status" value="1"/>
</dbReference>
<dbReference type="PANTHER" id="PTHR34699">
    <property type="match status" value="1"/>
</dbReference>
<dbReference type="PANTHER" id="PTHR34699:SF2">
    <property type="entry name" value="NON-CANONICAL PURINE NTP PHOSPHATASE_PRRC1 DOMAIN-CONTAINING PROTEIN"/>
    <property type="match status" value="1"/>
</dbReference>
<dbReference type="Pfam" id="PF01931">
    <property type="entry name" value="NTPase_I-T"/>
    <property type="match status" value="1"/>
</dbReference>
<dbReference type="SUPFAM" id="SSF52972">
    <property type="entry name" value="ITPase-like"/>
    <property type="match status" value="1"/>
</dbReference>